<feature type="chain" id="PRO_0000136905" description="Ribosome biogenesis protein RLP24">
    <location>
        <begin position="1"/>
        <end position="197"/>
    </location>
</feature>
<feature type="region of interest" description="Disordered" evidence="2">
    <location>
        <begin position="147"/>
        <end position="180"/>
    </location>
</feature>
<feature type="compositionally biased region" description="Acidic residues" evidence="2">
    <location>
        <begin position="154"/>
        <end position="176"/>
    </location>
</feature>
<evidence type="ECO:0000250" key="1">
    <source>
        <dbReference type="UniProtKB" id="Q07915"/>
    </source>
</evidence>
<evidence type="ECO:0000256" key="2">
    <source>
        <dbReference type="SAM" id="MobiDB-lite"/>
    </source>
</evidence>
<evidence type="ECO:0000305" key="3"/>
<gene>
    <name type="primary">RLP24</name>
    <name type="ordered locus">CAGL0J00957g</name>
</gene>
<name>RLP24_CANGA</name>
<protein>
    <recommendedName>
        <fullName>Ribosome biogenesis protein RLP24</fullName>
    </recommendedName>
</protein>
<reference key="1">
    <citation type="journal article" date="2004" name="Nature">
        <title>Genome evolution in yeasts.</title>
        <authorList>
            <person name="Dujon B."/>
            <person name="Sherman D."/>
            <person name="Fischer G."/>
            <person name="Durrens P."/>
            <person name="Casaregola S."/>
            <person name="Lafontaine I."/>
            <person name="de Montigny J."/>
            <person name="Marck C."/>
            <person name="Neuveglise C."/>
            <person name="Talla E."/>
            <person name="Goffard N."/>
            <person name="Frangeul L."/>
            <person name="Aigle M."/>
            <person name="Anthouard V."/>
            <person name="Babour A."/>
            <person name="Barbe V."/>
            <person name="Barnay S."/>
            <person name="Blanchin S."/>
            <person name="Beckerich J.-M."/>
            <person name="Beyne E."/>
            <person name="Bleykasten C."/>
            <person name="Boisrame A."/>
            <person name="Boyer J."/>
            <person name="Cattolico L."/>
            <person name="Confanioleri F."/>
            <person name="de Daruvar A."/>
            <person name="Despons L."/>
            <person name="Fabre E."/>
            <person name="Fairhead C."/>
            <person name="Ferry-Dumazet H."/>
            <person name="Groppi A."/>
            <person name="Hantraye F."/>
            <person name="Hennequin C."/>
            <person name="Jauniaux N."/>
            <person name="Joyet P."/>
            <person name="Kachouri R."/>
            <person name="Kerrest A."/>
            <person name="Koszul R."/>
            <person name="Lemaire M."/>
            <person name="Lesur I."/>
            <person name="Ma L."/>
            <person name="Muller H."/>
            <person name="Nicaud J.-M."/>
            <person name="Nikolski M."/>
            <person name="Oztas S."/>
            <person name="Ozier-Kalogeropoulos O."/>
            <person name="Pellenz S."/>
            <person name="Potier S."/>
            <person name="Richard G.-F."/>
            <person name="Straub M.-L."/>
            <person name="Suleau A."/>
            <person name="Swennen D."/>
            <person name="Tekaia F."/>
            <person name="Wesolowski-Louvel M."/>
            <person name="Westhof E."/>
            <person name="Wirth B."/>
            <person name="Zeniou-Meyer M."/>
            <person name="Zivanovic Y."/>
            <person name="Bolotin-Fukuhara M."/>
            <person name="Thierry A."/>
            <person name="Bouchier C."/>
            <person name="Caudron B."/>
            <person name="Scarpelli C."/>
            <person name="Gaillardin C."/>
            <person name="Weissenbach J."/>
            <person name="Wincker P."/>
            <person name="Souciet J.-L."/>
        </authorList>
    </citation>
    <scope>NUCLEOTIDE SEQUENCE [LARGE SCALE GENOMIC DNA]</scope>
    <source>
        <strain>ATCC 2001 / BCRC 20586 / JCM 3761 / NBRC 0622 / NRRL Y-65 / CBS 138</strain>
    </source>
</reference>
<dbReference type="EMBL" id="CR380956">
    <property type="protein sequence ID" value="CAG60701.1"/>
    <property type="molecule type" value="Genomic_DNA"/>
</dbReference>
<dbReference type="RefSeq" id="XP_447754.1">
    <property type="nucleotide sequence ID" value="XM_447754.1"/>
</dbReference>
<dbReference type="SMR" id="Q6FPU0"/>
<dbReference type="FunCoup" id="Q6FPU0">
    <property type="interactions" value="1086"/>
</dbReference>
<dbReference type="STRING" id="284593.Q6FPU0"/>
<dbReference type="EnsemblFungi" id="CAGL0J00957g-T">
    <property type="protein sequence ID" value="CAGL0J00957g-T-p1"/>
    <property type="gene ID" value="CAGL0J00957g"/>
</dbReference>
<dbReference type="KEGG" id="cgr:2889845"/>
<dbReference type="CGD" id="CAL0133654">
    <property type="gene designation" value="CAGL0J00957g"/>
</dbReference>
<dbReference type="VEuPathDB" id="FungiDB:B1J91_J00957g"/>
<dbReference type="VEuPathDB" id="FungiDB:CAGL0J00957g"/>
<dbReference type="eggNOG" id="KOG1723">
    <property type="taxonomic scope" value="Eukaryota"/>
</dbReference>
<dbReference type="HOGENOM" id="CLU_089419_1_1_1"/>
<dbReference type="InParanoid" id="Q6FPU0"/>
<dbReference type="OMA" id="NAGKEMT"/>
<dbReference type="Proteomes" id="UP000002428">
    <property type="component" value="Chromosome J"/>
</dbReference>
<dbReference type="GO" id="GO:0005737">
    <property type="term" value="C:cytoplasm"/>
    <property type="evidence" value="ECO:0007669"/>
    <property type="project" value="UniProtKB-SubCell"/>
</dbReference>
<dbReference type="GO" id="GO:0005730">
    <property type="term" value="C:nucleolus"/>
    <property type="evidence" value="ECO:0007669"/>
    <property type="project" value="EnsemblFungi"/>
</dbReference>
<dbReference type="GO" id="GO:0030687">
    <property type="term" value="C:preribosome, large subunit precursor"/>
    <property type="evidence" value="ECO:0007669"/>
    <property type="project" value="EnsemblFungi"/>
</dbReference>
<dbReference type="GO" id="GO:0001671">
    <property type="term" value="F:ATPase activator activity"/>
    <property type="evidence" value="ECO:0007669"/>
    <property type="project" value="EnsemblFungi"/>
</dbReference>
<dbReference type="GO" id="GO:0051117">
    <property type="term" value="F:ATPase binding"/>
    <property type="evidence" value="ECO:0007669"/>
    <property type="project" value="EnsemblFungi"/>
</dbReference>
<dbReference type="GO" id="GO:0003735">
    <property type="term" value="F:structural constituent of ribosome"/>
    <property type="evidence" value="ECO:0007669"/>
    <property type="project" value="InterPro"/>
</dbReference>
<dbReference type="GO" id="GO:1902626">
    <property type="term" value="P:assembly of large subunit precursor of preribosome"/>
    <property type="evidence" value="ECO:0007669"/>
    <property type="project" value="EnsemblFungi"/>
</dbReference>
<dbReference type="CDD" id="cd00472">
    <property type="entry name" value="Ribosomal_L24e_L24"/>
    <property type="match status" value="1"/>
</dbReference>
<dbReference type="FunFam" id="2.30.170.20:FF:000001">
    <property type="entry name" value="probable ribosome biogenesis protein RLP24"/>
    <property type="match status" value="1"/>
</dbReference>
<dbReference type="Gene3D" id="2.30.170.20">
    <property type="entry name" value="Ribosomal protein L24e"/>
    <property type="match status" value="1"/>
</dbReference>
<dbReference type="InterPro" id="IPR038630">
    <property type="entry name" value="L24e/L24_sf"/>
</dbReference>
<dbReference type="InterPro" id="IPR056366">
    <property type="entry name" value="Ribosomal_eL24"/>
</dbReference>
<dbReference type="InterPro" id="IPR000988">
    <property type="entry name" value="Ribosomal_eL24-rel_N"/>
</dbReference>
<dbReference type="InterPro" id="IPR023442">
    <property type="entry name" value="Ribosomal_eL24_CS"/>
</dbReference>
<dbReference type="InterPro" id="IPR011017">
    <property type="entry name" value="TRASH_dom"/>
</dbReference>
<dbReference type="PANTHER" id="PTHR10792">
    <property type="entry name" value="60S RIBOSOMAL PROTEIN L24"/>
    <property type="match status" value="1"/>
</dbReference>
<dbReference type="PANTHER" id="PTHR10792:SF8">
    <property type="entry name" value="RIBOSOME BIOGENESIS PROTEIN RLP24-RELATED"/>
    <property type="match status" value="1"/>
</dbReference>
<dbReference type="Pfam" id="PF01246">
    <property type="entry name" value="Ribosomal_L24e"/>
    <property type="match status" value="1"/>
</dbReference>
<dbReference type="SMART" id="SM00746">
    <property type="entry name" value="TRASH"/>
    <property type="match status" value="1"/>
</dbReference>
<dbReference type="SUPFAM" id="SSF57716">
    <property type="entry name" value="Glucocorticoid receptor-like (DNA-binding domain)"/>
    <property type="match status" value="1"/>
</dbReference>
<dbReference type="PROSITE" id="PS01073">
    <property type="entry name" value="RIBOSOMAL_L24E"/>
    <property type="match status" value="1"/>
</dbReference>
<sequence>MRIYQCHFCSSPVYPGHGIMFVRNDAKEFRFCRSKCHKNFKQRRNPRKLKWTKAFRKAAGKELAVDSTLTFAQRRNVPVRYNRELVATTLKAMSRIEEIRQKRERAFYKNRMKGNSERDFLRDKKLVETNPELLRLREVEIANRLAKEQAAAEEVSEEESEEEEDMEVDSEEEEEEKLQKQKILLKNKKRNAKKLAF</sequence>
<comment type="function">
    <text evidence="1">Involved in the biogenesis of the 60S ribosomal subunit. Ensures the docking of NOG1 to pre-60S particles. Activates and recruits ATPase AFG2 to cytoplasmic pre-60S ribosomal particles.</text>
</comment>
<comment type="subunit">
    <text evidence="1">Associated with nucleolar and cytoplasmic pre-60S particles. At the end of biogenesis it dissociates from cytoplasmic pre-60S particles and is likely to be exchanged for its ribosomal homolog, RPL24.</text>
</comment>
<comment type="subcellular location">
    <subcellularLocation>
        <location evidence="1">Cytoplasm</location>
    </subcellularLocation>
    <subcellularLocation>
        <location evidence="1">Nucleus</location>
    </subcellularLocation>
    <text evidence="1">Shuttles between the nucleus and the cytoplasm.</text>
</comment>
<comment type="similarity">
    <text evidence="3">Belongs to the eukaryotic ribosomal protein eL24 family.</text>
</comment>
<keyword id="KW-0963">Cytoplasm</keyword>
<keyword id="KW-0539">Nucleus</keyword>
<keyword id="KW-1185">Reference proteome</keyword>
<keyword id="KW-0690">Ribosome biogenesis</keyword>
<organism>
    <name type="scientific">Candida glabrata (strain ATCC 2001 / BCRC 20586 / JCM 3761 / NBRC 0622 / NRRL Y-65 / CBS 138)</name>
    <name type="common">Yeast</name>
    <name type="synonym">Nakaseomyces glabratus</name>
    <dbReference type="NCBI Taxonomy" id="284593"/>
    <lineage>
        <taxon>Eukaryota</taxon>
        <taxon>Fungi</taxon>
        <taxon>Dikarya</taxon>
        <taxon>Ascomycota</taxon>
        <taxon>Saccharomycotina</taxon>
        <taxon>Saccharomycetes</taxon>
        <taxon>Saccharomycetales</taxon>
        <taxon>Saccharomycetaceae</taxon>
        <taxon>Nakaseomyces</taxon>
    </lineage>
</organism>
<proteinExistence type="inferred from homology"/>
<accession>Q6FPU0</accession>